<organism>
    <name type="scientific">Eremothecium gossypii (strain ATCC 10895 / CBS 109.51 / FGSC 9923 / NRRL Y-1056)</name>
    <name type="common">Yeast</name>
    <name type="synonym">Ashbya gossypii</name>
    <dbReference type="NCBI Taxonomy" id="284811"/>
    <lineage>
        <taxon>Eukaryota</taxon>
        <taxon>Fungi</taxon>
        <taxon>Dikarya</taxon>
        <taxon>Ascomycota</taxon>
        <taxon>Saccharomycotina</taxon>
        <taxon>Saccharomycetes</taxon>
        <taxon>Saccharomycetales</taxon>
        <taxon>Saccharomycetaceae</taxon>
        <taxon>Eremothecium</taxon>
    </lineage>
</organism>
<accession>Q755T1</accession>
<name>CTU1_EREGS</name>
<evidence type="ECO:0000255" key="1">
    <source>
        <dbReference type="HAMAP-Rule" id="MF_03053"/>
    </source>
</evidence>
<protein>
    <recommendedName>
        <fullName evidence="1">Cytoplasmic tRNA 2-thiolation protein 1</fullName>
        <ecNumber evidence="1">2.7.7.-</ecNumber>
    </recommendedName>
    <alternativeName>
        <fullName evidence="1">Cytoplasmic tRNA adenylyltransferase 1</fullName>
    </alternativeName>
</protein>
<proteinExistence type="inferred from homology"/>
<comment type="function">
    <text evidence="1">Plays a central role in 2-thiolation of mcm(5)S(2)U at tRNA wobble positions of tRNA(Lys), tRNA(Glu) and tRNA(Gln). Directly binds tRNAs and probably acts by catalyzing adenylation of tRNAs, an intermediate required for 2-thiolation. It is unclear whether it acts as a sulfurtransferase that transfers sulfur from thiocarboxylated URM1 onto the uridine of tRNAs at wobble position. Prior mcm(5) tRNA modification by the elongator complex is required for 2-thiolation. May also be involved in protein urmylation.</text>
</comment>
<comment type="pathway">
    <text evidence="1">tRNA modification; 5-methoxycarbonylmethyl-2-thiouridine-tRNA biosynthesis.</text>
</comment>
<comment type="subcellular location">
    <subcellularLocation>
        <location evidence="1">Cytoplasm</location>
    </subcellularLocation>
</comment>
<comment type="similarity">
    <text evidence="1">Belongs to the TtcA family. CTU1/NCS6/ATPBD3 subfamily.</text>
</comment>
<sequence>MYIPPSDPRRPAKVTAGQLCELCHARKALVKRPKNLQKVCKLCFFHVFETEIHNTIMENKLFQRGERVAVGASGGKDSTVLAYILKLLNERHDYGLEIVLLSIDEGIVGYRDDSLATVKRNQEQYGLPLKIVSYKDLYDWTMDEIVACAGMRNSCTYCGVFRRQALDRGAAMLDIHHVVTGHNADDMAETVLMNILRGDVARLEKSTAILTQSSGSPVKRSKPFKYAYQKEIVLYAHYKKLDYFSTECSYAPEAFRGTARELMKNLEAVRPSCIIDIIHSGEALRLRPRPKKRAPPPGSVEIRADGSASLFRNEGFVDGNRCERCGYLSSNRICKACMLLEGLEKNRARVQIADDTSTEGAARLTRTLEKLHF</sequence>
<feature type="chain" id="PRO_0000368256" description="Cytoplasmic tRNA 2-thiolation protein 1">
    <location>
        <begin position="1"/>
        <end position="373"/>
    </location>
</feature>
<gene>
    <name evidence="1" type="primary">NCS6</name>
    <name evidence="1" type="synonym">CTU1</name>
    <name type="ordered locus">AER437C</name>
</gene>
<reference key="1">
    <citation type="journal article" date="2004" name="Science">
        <title>The Ashbya gossypii genome as a tool for mapping the ancient Saccharomyces cerevisiae genome.</title>
        <authorList>
            <person name="Dietrich F.S."/>
            <person name="Voegeli S."/>
            <person name="Brachat S."/>
            <person name="Lerch A."/>
            <person name="Gates K."/>
            <person name="Steiner S."/>
            <person name="Mohr C."/>
            <person name="Poehlmann R."/>
            <person name="Luedi P."/>
            <person name="Choi S."/>
            <person name="Wing R.A."/>
            <person name="Flavier A."/>
            <person name="Gaffney T.D."/>
            <person name="Philippsen P."/>
        </authorList>
    </citation>
    <scope>NUCLEOTIDE SEQUENCE [LARGE SCALE GENOMIC DNA]</scope>
    <source>
        <strain>ATCC 10895 / CBS 109.51 / FGSC 9923 / NRRL Y-1056</strain>
    </source>
</reference>
<reference key="2">
    <citation type="journal article" date="2013" name="G3 (Bethesda)">
        <title>Genomes of Ashbya fungi isolated from insects reveal four mating-type loci, numerous translocations, lack of transposons, and distinct gene duplications.</title>
        <authorList>
            <person name="Dietrich F.S."/>
            <person name="Voegeli S."/>
            <person name="Kuo S."/>
            <person name="Philippsen P."/>
        </authorList>
    </citation>
    <scope>GENOME REANNOTATION</scope>
    <source>
        <strain>ATCC 10895 / CBS 109.51 / FGSC 9923 / NRRL Y-1056</strain>
    </source>
</reference>
<dbReference type="EC" id="2.7.7.-" evidence="1"/>
<dbReference type="EMBL" id="AE016818">
    <property type="protein sequence ID" value="AAS53116.1"/>
    <property type="molecule type" value="Genomic_DNA"/>
</dbReference>
<dbReference type="RefSeq" id="NP_985292.1">
    <property type="nucleotide sequence ID" value="NM_210646.1"/>
</dbReference>
<dbReference type="SMR" id="Q755T1"/>
<dbReference type="FunCoup" id="Q755T1">
    <property type="interactions" value="465"/>
</dbReference>
<dbReference type="STRING" id="284811.Q755T1"/>
<dbReference type="EnsemblFungi" id="AAS53116">
    <property type="protein sequence ID" value="AAS53116"/>
    <property type="gene ID" value="AGOS_AER437C"/>
</dbReference>
<dbReference type="GeneID" id="4621512"/>
<dbReference type="KEGG" id="ago:AGOS_AER437C"/>
<dbReference type="eggNOG" id="KOG2840">
    <property type="taxonomic scope" value="Eukaryota"/>
</dbReference>
<dbReference type="HOGENOM" id="CLU_026481_1_0_1"/>
<dbReference type="InParanoid" id="Q755T1"/>
<dbReference type="OMA" id="MGKCERC"/>
<dbReference type="OrthoDB" id="198857at2759"/>
<dbReference type="UniPathway" id="UPA00988"/>
<dbReference type="Proteomes" id="UP000000591">
    <property type="component" value="Chromosome V"/>
</dbReference>
<dbReference type="GO" id="GO:0005829">
    <property type="term" value="C:cytosol"/>
    <property type="evidence" value="ECO:0000250"/>
    <property type="project" value="UniProtKB"/>
</dbReference>
<dbReference type="GO" id="GO:0002144">
    <property type="term" value="C:cytosolic tRNA wobble base thiouridylase complex"/>
    <property type="evidence" value="ECO:0000318"/>
    <property type="project" value="GO_Central"/>
</dbReference>
<dbReference type="GO" id="GO:0005777">
    <property type="term" value="C:peroxisome"/>
    <property type="evidence" value="ECO:0007669"/>
    <property type="project" value="EnsemblFungi"/>
</dbReference>
<dbReference type="GO" id="GO:0016779">
    <property type="term" value="F:nucleotidyltransferase activity"/>
    <property type="evidence" value="ECO:0007669"/>
    <property type="project" value="UniProtKB-UniRule"/>
</dbReference>
<dbReference type="GO" id="GO:0000049">
    <property type="term" value="F:tRNA binding"/>
    <property type="evidence" value="ECO:0000250"/>
    <property type="project" value="UniProtKB"/>
</dbReference>
<dbReference type="GO" id="GO:0103016">
    <property type="term" value="F:tRNA-uridine 2-sulfurtransferase activity"/>
    <property type="evidence" value="ECO:0007669"/>
    <property type="project" value="EnsemblFungi"/>
</dbReference>
<dbReference type="GO" id="GO:0032447">
    <property type="term" value="P:protein urmylation"/>
    <property type="evidence" value="ECO:0007669"/>
    <property type="project" value="UniProtKB-UniRule"/>
</dbReference>
<dbReference type="GO" id="GO:0034227">
    <property type="term" value="P:tRNA thio-modification"/>
    <property type="evidence" value="ECO:0000250"/>
    <property type="project" value="UniProtKB"/>
</dbReference>
<dbReference type="GO" id="GO:0002143">
    <property type="term" value="P:tRNA wobble position uridine thiolation"/>
    <property type="evidence" value="ECO:0000318"/>
    <property type="project" value="GO_Central"/>
</dbReference>
<dbReference type="GO" id="GO:0002098">
    <property type="term" value="P:tRNA wobble uridine modification"/>
    <property type="evidence" value="ECO:0000250"/>
    <property type="project" value="UniProtKB"/>
</dbReference>
<dbReference type="CDD" id="cd01713">
    <property type="entry name" value="CTU1-like"/>
    <property type="match status" value="1"/>
</dbReference>
<dbReference type="FunFam" id="3.40.50.620:FF:000188">
    <property type="entry name" value="Cytoplasmic tRNA 2-thiolation protein 1"/>
    <property type="match status" value="1"/>
</dbReference>
<dbReference type="Gene3D" id="3.40.50.620">
    <property type="entry name" value="HUPs"/>
    <property type="match status" value="1"/>
</dbReference>
<dbReference type="HAMAP" id="MF_03053">
    <property type="entry name" value="CTU1"/>
    <property type="match status" value="1"/>
</dbReference>
<dbReference type="InterPro" id="IPR056369">
    <property type="entry name" value="CTU1-like_ATP-bd"/>
</dbReference>
<dbReference type="InterPro" id="IPR032442">
    <property type="entry name" value="CTU1_C"/>
</dbReference>
<dbReference type="InterPro" id="IPR000541">
    <property type="entry name" value="Ncs6/Tuc1/Ctu1"/>
</dbReference>
<dbReference type="InterPro" id="IPR014729">
    <property type="entry name" value="Rossmann-like_a/b/a_fold"/>
</dbReference>
<dbReference type="InterPro" id="IPR011063">
    <property type="entry name" value="TilS/TtcA_N"/>
</dbReference>
<dbReference type="InterPro" id="IPR035107">
    <property type="entry name" value="tRNA_thiolation_TtcA_Ctu1"/>
</dbReference>
<dbReference type="InterPro" id="IPR020554">
    <property type="entry name" value="UPF0021_CS"/>
</dbReference>
<dbReference type="PANTHER" id="PTHR11807">
    <property type="entry name" value="ATPASES OF THE PP SUPERFAMILY-RELATED"/>
    <property type="match status" value="1"/>
</dbReference>
<dbReference type="PANTHER" id="PTHR11807:SF12">
    <property type="entry name" value="CYTOPLASMIC TRNA 2-THIOLATION PROTEIN 1"/>
    <property type="match status" value="1"/>
</dbReference>
<dbReference type="Pfam" id="PF01171">
    <property type="entry name" value="ATP_bind_3"/>
    <property type="match status" value="1"/>
</dbReference>
<dbReference type="Pfam" id="PF16503">
    <property type="entry name" value="zn-ribbon_14"/>
    <property type="match status" value="1"/>
</dbReference>
<dbReference type="PIRSF" id="PIRSF004976">
    <property type="entry name" value="ATPase_YdaO"/>
    <property type="match status" value="1"/>
</dbReference>
<dbReference type="SUPFAM" id="SSF52402">
    <property type="entry name" value="Adenine nucleotide alpha hydrolases-like"/>
    <property type="match status" value="1"/>
</dbReference>
<dbReference type="PROSITE" id="PS01263">
    <property type="entry name" value="UPF0021"/>
    <property type="match status" value="1"/>
</dbReference>
<keyword id="KW-0963">Cytoplasm</keyword>
<keyword id="KW-1185">Reference proteome</keyword>
<keyword id="KW-0694">RNA-binding</keyword>
<keyword id="KW-0808">Transferase</keyword>
<keyword id="KW-0819">tRNA processing</keyword>
<keyword id="KW-0820">tRNA-binding</keyword>